<dbReference type="EMBL" id="AJ252261">
    <property type="protein sequence ID" value="CAB65674.1"/>
    <property type="molecule type" value="Genomic_DNA"/>
</dbReference>
<dbReference type="EMBL" id="AJ303204">
    <property type="protein sequence ID" value="CAC33573.1"/>
    <property type="molecule type" value="Genomic_DNA"/>
</dbReference>
<dbReference type="GlyCosmos" id="P81780">
    <property type="glycosylation" value="4 sites, No reported glycans"/>
</dbReference>
<dbReference type="GO" id="GO:0016020">
    <property type="term" value="C:membrane"/>
    <property type="evidence" value="ECO:0007669"/>
    <property type="project" value="UniProtKB-KW"/>
</dbReference>
<dbReference type="GO" id="GO:0019031">
    <property type="term" value="C:viral envelope"/>
    <property type="evidence" value="ECO:0007669"/>
    <property type="project" value="UniProtKB-KW"/>
</dbReference>
<dbReference type="GO" id="GO:0055036">
    <property type="term" value="C:virion membrane"/>
    <property type="evidence" value="ECO:0007669"/>
    <property type="project" value="UniProtKB-SubCell"/>
</dbReference>
<dbReference type="InterPro" id="IPR002896">
    <property type="entry name" value="Herpes_glycop_dom"/>
</dbReference>
<dbReference type="InterPro" id="IPR036179">
    <property type="entry name" value="Ig-like_dom_sf"/>
</dbReference>
<dbReference type="Pfam" id="PF01537">
    <property type="entry name" value="Herpes_glycop_D"/>
    <property type="match status" value="1"/>
</dbReference>
<dbReference type="SUPFAM" id="SSF48726">
    <property type="entry name" value="Immunoglobulin"/>
    <property type="match status" value="1"/>
</dbReference>
<accession>P81780</accession>
<accession>Q98VG3</accession>
<accession>Q9Q0B8</accession>
<gene>
    <name type="primary">gG</name>
    <name type="ORF">US4</name>
</gene>
<protein>
    <recommendedName>
        <fullName>Envelope glycoprotein G</fullName>
        <shortName>gG</shortName>
    </recommendedName>
    <alternativeName>
        <fullName>gG-2</fullName>
    </alternativeName>
</protein>
<comment type="function">
    <text evidence="1">Chemokine-binding protein that inhibits neutrophils' chemotaxis.</text>
</comment>
<comment type="subcellular location">
    <subcellularLocation>
        <location evidence="5">Virion membrane</location>
        <topology evidence="5">Single-pass type I membrane protein</topology>
    </subcellularLocation>
</comment>
<comment type="miscellaneous">
    <text>Glycoprotein G is much larger in HSV-2 than in HSV-1.</text>
</comment>
<comment type="similarity">
    <text evidence="5">Belongs to the alphaherpesvirinae glycoprotein G family.</text>
</comment>
<reference key="1">
    <citation type="journal article" date="2000" name="J. Clin. Microbiol.">
        <title>Conservation of type-specific B-cell epitopes of glycoprotein G in clinical herpes simplex virus type 2 isolates.</title>
        <authorList>
            <person name="Liljeqvist J.-A."/>
            <person name="Svennerholm B."/>
            <person name="Bergstroem T."/>
        </authorList>
    </citation>
    <scope>NUCLEOTIDE SEQUENCE [GENOMIC DNA] OF 342-697</scope>
</reference>
<reference key="2">
    <citation type="journal article" date="2002" name="J. Gen. Virol.">
        <title>Monoclonal antibodies and human sera directed to the secreted glycoprotein G of herpes simplex virus type 2 recognize type-specific antigenic determinants.</title>
        <authorList>
            <person name="Liljeqvist J.-A."/>
            <person name="Trybala E."/>
            <person name="Hoebeke J."/>
            <person name="Svennerholm B."/>
            <person name="Bergstroem T."/>
        </authorList>
    </citation>
    <scope>NUCLEOTIDE SEQUENCE [GENOMIC DNA] OF 1-341</scope>
</reference>
<reference key="3">
    <citation type="journal article" date="1999" name="J. Virol.">
        <title>Herpes simplex virus type 2 glycoprotein G-negative clinical isolates are generated by single frameshift mutations.</title>
        <authorList>
            <person name="Liljeqvist J.A."/>
            <person name="Svennerholm B."/>
            <person name="Bergstrom T."/>
        </authorList>
    </citation>
    <scope>PROTEIN SEQUENCE OF 23-30</scope>
</reference>
<feature type="signal peptide" evidence="4">
    <location>
        <begin position="1"/>
        <end position="22"/>
    </location>
</feature>
<feature type="chain" id="PRO_0000115768" description="Envelope glycoprotein G">
    <location>
        <begin position="23"/>
        <end position="697"/>
    </location>
</feature>
<feature type="topological domain" description="Virion surface" evidence="2">
    <location>
        <begin position="23"/>
        <end position="648"/>
    </location>
</feature>
<feature type="transmembrane region" description="Helical" evidence="2">
    <location>
        <begin position="649"/>
        <end position="669"/>
    </location>
</feature>
<feature type="topological domain" description="Intravirion" evidence="2">
    <location>
        <begin position="670"/>
        <end position="697"/>
    </location>
</feature>
<feature type="region of interest" description="Disordered" evidence="3">
    <location>
        <begin position="298"/>
        <end position="389"/>
    </location>
</feature>
<feature type="region of interest" description="Disordered" evidence="3">
    <location>
        <begin position="402"/>
        <end position="630"/>
    </location>
</feature>
<feature type="compositionally biased region" description="Basic and acidic residues" evidence="3">
    <location>
        <begin position="322"/>
        <end position="335"/>
    </location>
</feature>
<feature type="compositionally biased region" description="Low complexity" evidence="3">
    <location>
        <begin position="375"/>
        <end position="389"/>
    </location>
</feature>
<feature type="compositionally biased region" description="Low complexity" evidence="3">
    <location>
        <begin position="402"/>
        <end position="445"/>
    </location>
</feature>
<feature type="compositionally biased region" description="Pro residues" evidence="3">
    <location>
        <begin position="446"/>
        <end position="457"/>
    </location>
</feature>
<feature type="compositionally biased region" description="Pro residues" evidence="3">
    <location>
        <begin position="465"/>
        <end position="480"/>
    </location>
</feature>
<feature type="compositionally biased region" description="Low complexity" evidence="3">
    <location>
        <begin position="481"/>
        <end position="529"/>
    </location>
</feature>
<feature type="compositionally biased region" description="Pro residues" evidence="3">
    <location>
        <begin position="542"/>
        <end position="552"/>
    </location>
</feature>
<feature type="compositionally biased region" description="Acidic residues" evidence="3">
    <location>
        <begin position="560"/>
        <end position="576"/>
    </location>
</feature>
<feature type="compositionally biased region" description="Pro residues" evidence="3">
    <location>
        <begin position="587"/>
        <end position="603"/>
    </location>
</feature>
<feature type="glycosylation site" description="N-linked (GlcNAc...) asparagine; by host" evidence="2">
    <location>
        <position position="104"/>
    </location>
</feature>
<feature type="glycosylation site" description="N-linked (GlcNAc...) asparagine; by host" evidence="2">
    <location>
        <position position="163"/>
    </location>
</feature>
<feature type="glycosylation site" description="N-linked (GlcNAc...) asparagine; by host" evidence="2">
    <location>
        <position position="435"/>
    </location>
</feature>
<feature type="glycosylation site" description="N-linked (GlcNAc...) asparagine; by host" evidence="2">
    <location>
        <position position="510"/>
    </location>
</feature>
<proteinExistence type="evidence at protein level"/>
<organismHost>
    <name type="scientific">Homo sapiens</name>
    <name type="common">Human</name>
    <dbReference type="NCBI Taxonomy" id="9606"/>
</organismHost>
<keyword id="KW-0903">Direct protein sequencing</keyword>
<keyword id="KW-0325">Glycoprotein</keyword>
<keyword id="KW-0472">Membrane</keyword>
<keyword id="KW-0732">Signal</keyword>
<keyword id="KW-0812">Transmembrane</keyword>
<keyword id="KW-1133">Transmembrane helix</keyword>
<keyword id="KW-0261">Viral envelope protein</keyword>
<keyword id="KW-0946">Virion</keyword>
<sequence>MHAIAPRLLLLFVLSGLPGTRGGSGVPGPINPPNNDVVFPGGSPVAQYCYAYPRLDDPGPLGSADAGRQDLPRRVVRHEPLGRSFLTGGLVLLAPPVRGFGAPNATYAAHVTYYRLTRACRQPILLRQYGGCRGGEPPSPKTCGSYTYTYQGGGPPTRYALVNASLLVPIWDRAAETFEYQIELGGELHVGLLWVEVGGEGPGPTAPPQAARAEGGPCVPPVPAGRPWRSVPPVWYSAPNPGFRGLRFRERCLPPQTPAAPSDLPRVAFAPQSLLVGITGRTFIRMARPTEDGVLPPHWAPGALDDGPYAPFPPRPRFRRALRTDPEGVDPDVRAPRTGRRLMALTEDASSDSPTSAPEKTPLPVSATAMAPSVDPSAEPTAPATTTPPDEMATQAATVAVTPEETAVASPPATASVESSPPPAAAATPGAGHTNTSSASAAKTPPTTPAPTTPPPTSTHATPRPTTPGPQTTPPGPATPGPVGASAAPTADSPLTALPPATAPGPSAANVSVAATTATPGTRGTARTPPTDPKTHPHGPADAPPGSPAPPPPEHRGGPEEFEGAGDGEPPEDDDSATGLAFRTPNPNKPPPARPGPIRPTLPPGILGPLAPNTPRPPAQAPAKDMPSGPTPQHIPLFWFLTASPALDILFIISTTIHTAAFVCLVALAAQLWRGRAGRRRYAHPSVRYVCLPPERD</sequence>
<name>GG_HHV2B</name>
<organism>
    <name type="scientific">Human herpesvirus 2 (strain B4327UR)</name>
    <name type="common">HHV-2</name>
    <name type="synonym">Human herpes simplex virus 2</name>
    <dbReference type="NCBI Taxonomy" id="103921"/>
    <lineage>
        <taxon>Viruses</taxon>
        <taxon>Duplodnaviria</taxon>
        <taxon>Heunggongvirae</taxon>
        <taxon>Peploviricota</taxon>
        <taxon>Herviviricetes</taxon>
        <taxon>Herpesvirales</taxon>
        <taxon>Orthoherpesviridae</taxon>
        <taxon>Alphaherpesvirinae</taxon>
        <taxon>Simplexvirus</taxon>
        <taxon>Simplexvirus humanalpha2</taxon>
        <taxon>Human herpesvirus 2</taxon>
    </lineage>
</organism>
<evidence type="ECO:0000250" key="1"/>
<evidence type="ECO:0000255" key="2"/>
<evidence type="ECO:0000256" key="3">
    <source>
        <dbReference type="SAM" id="MobiDB-lite"/>
    </source>
</evidence>
<evidence type="ECO:0000269" key="4">
    <source>
    </source>
</evidence>
<evidence type="ECO:0000305" key="5"/>